<geneLocation type="chloroplast"/>
<keyword id="KW-0150">Chloroplast</keyword>
<keyword id="KW-0472">Membrane</keyword>
<keyword id="KW-0602">Photosynthesis</keyword>
<keyword id="KW-0604">Photosystem II</keyword>
<keyword id="KW-0934">Plastid</keyword>
<keyword id="KW-0793">Thylakoid</keyword>
<keyword id="KW-0812">Transmembrane</keyword>
<keyword id="KW-1133">Transmembrane helix</keyword>
<protein>
    <recommendedName>
        <fullName evidence="1">Photosystem II reaction center protein T</fullName>
        <shortName evidence="1">PSII-T</shortName>
    </recommendedName>
</protein>
<organism>
    <name type="scientific">Cercidiphyllum japonicum</name>
    <name type="common">Katsura tree</name>
    <dbReference type="NCBI Taxonomy" id="13413"/>
    <lineage>
        <taxon>Eukaryota</taxon>
        <taxon>Viridiplantae</taxon>
        <taxon>Streptophyta</taxon>
        <taxon>Embryophyta</taxon>
        <taxon>Tracheophyta</taxon>
        <taxon>Spermatophyta</taxon>
        <taxon>Magnoliopsida</taxon>
        <taxon>eudicotyledons</taxon>
        <taxon>Gunneridae</taxon>
        <taxon>Pentapetalae</taxon>
        <taxon>Saxifragales</taxon>
        <taxon>Cercidiphyllaceae</taxon>
        <taxon>Cercidiphyllum</taxon>
    </lineage>
</organism>
<dbReference type="EMBL" id="AF123848">
    <property type="protein sequence ID" value="AAG26270.1"/>
    <property type="molecule type" value="Genomic_DNA"/>
</dbReference>
<dbReference type="RefSeq" id="YP_009493298.1">
    <property type="nucleotide sequence ID" value="NC_037940.1"/>
</dbReference>
<dbReference type="SMR" id="Q7J195"/>
<dbReference type="GeneID" id="36953567"/>
<dbReference type="GO" id="GO:0009535">
    <property type="term" value="C:chloroplast thylakoid membrane"/>
    <property type="evidence" value="ECO:0007669"/>
    <property type="project" value="UniProtKB-SubCell"/>
</dbReference>
<dbReference type="GO" id="GO:0009539">
    <property type="term" value="C:photosystem II reaction center"/>
    <property type="evidence" value="ECO:0007669"/>
    <property type="project" value="InterPro"/>
</dbReference>
<dbReference type="GO" id="GO:0015979">
    <property type="term" value="P:photosynthesis"/>
    <property type="evidence" value="ECO:0007669"/>
    <property type="project" value="UniProtKB-UniRule"/>
</dbReference>
<dbReference type="HAMAP" id="MF_00808">
    <property type="entry name" value="PSII_PsbT"/>
    <property type="match status" value="1"/>
</dbReference>
<dbReference type="InterPro" id="IPR001743">
    <property type="entry name" value="PSII_PsbT"/>
</dbReference>
<dbReference type="InterPro" id="IPR037268">
    <property type="entry name" value="PSII_PsbT_sf"/>
</dbReference>
<dbReference type="PANTHER" id="PTHR36411">
    <property type="match status" value="1"/>
</dbReference>
<dbReference type="PANTHER" id="PTHR36411:SF2">
    <property type="entry name" value="PHOTOSYSTEM II REACTION CENTER PROTEIN T"/>
    <property type="match status" value="1"/>
</dbReference>
<dbReference type="Pfam" id="PF01405">
    <property type="entry name" value="PsbT"/>
    <property type="match status" value="1"/>
</dbReference>
<dbReference type="SUPFAM" id="SSF161029">
    <property type="entry name" value="Photosystem II reaction center protein T, PsbT"/>
    <property type="match status" value="1"/>
</dbReference>
<reference key="1">
    <citation type="journal article" date="2000" name="Am. J. Bot.">
        <title>Utility of 17 chloroplast genes for inferring the phylogeny of the basal angiosperms.</title>
        <authorList>
            <person name="Graham S.W."/>
            <person name="Olmstead R.G."/>
        </authorList>
    </citation>
    <scope>NUCLEOTIDE SEQUENCE [GENOMIC DNA]</scope>
</reference>
<sequence>MEALVYTFLLVSTLGIIFFAIFFREPPKVPTKKMK</sequence>
<name>PSBT_CERJA</name>
<comment type="function">
    <text evidence="1">Found at the monomer-monomer interface of the photosystem II (PS II) dimer, plays a role in assembly and dimerization of PSII. PSII is a light-driven water plastoquinone oxidoreductase, using light energy to abstract electrons from H(2)O, generating a proton gradient subsequently used for ATP formation.</text>
</comment>
<comment type="subunit">
    <text evidence="1">PSII is composed of 1 copy each of membrane proteins PsbA, PsbB, PsbC, PsbD, PsbE, PsbF, PsbH, PsbI, PsbJ, PsbK, PsbL, PsbM, PsbT, PsbY, PsbZ, Psb30/Ycf12, at least 3 peripheral proteins of the oxygen-evolving complex and a large number of cofactors. It forms dimeric complexes.</text>
</comment>
<comment type="subcellular location">
    <subcellularLocation>
        <location evidence="1">Plastid</location>
        <location evidence="1">Chloroplast thylakoid membrane</location>
        <topology evidence="1">Single-pass membrane protein</topology>
    </subcellularLocation>
</comment>
<comment type="similarity">
    <text evidence="1">Belongs to the PsbT family.</text>
</comment>
<feature type="chain" id="PRO_0000217915" description="Photosystem II reaction center protein T">
    <location>
        <begin position="1"/>
        <end position="35"/>
    </location>
</feature>
<feature type="transmembrane region" description="Helical" evidence="1">
    <location>
        <begin position="3"/>
        <end position="23"/>
    </location>
</feature>
<accession>Q7J195</accession>
<evidence type="ECO:0000255" key="1">
    <source>
        <dbReference type="HAMAP-Rule" id="MF_00808"/>
    </source>
</evidence>
<proteinExistence type="inferred from homology"/>
<gene>
    <name evidence="1" type="primary">psbT</name>
</gene>